<reference key="1">
    <citation type="journal article" date="2001" name="Proc. Natl. Acad. Sci. U.S.A.">
        <title>Analysis of the chromosome sequence of the legume symbiont Sinorhizobium meliloti strain 1021.</title>
        <authorList>
            <person name="Capela D."/>
            <person name="Barloy-Hubler F."/>
            <person name="Gouzy J."/>
            <person name="Bothe G."/>
            <person name="Ampe F."/>
            <person name="Batut J."/>
            <person name="Boistard P."/>
            <person name="Becker A."/>
            <person name="Boutry M."/>
            <person name="Cadieu E."/>
            <person name="Dreano S."/>
            <person name="Gloux S."/>
            <person name="Godrie T."/>
            <person name="Goffeau A."/>
            <person name="Kahn D."/>
            <person name="Kiss E."/>
            <person name="Lelaure V."/>
            <person name="Masuy D."/>
            <person name="Pohl T."/>
            <person name="Portetelle D."/>
            <person name="Puehler A."/>
            <person name="Purnelle B."/>
            <person name="Ramsperger U."/>
            <person name="Renard C."/>
            <person name="Thebault P."/>
            <person name="Vandenbol M."/>
            <person name="Weidner S."/>
            <person name="Galibert F."/>
        </authorList>
    </citation>
    <scope>NUCLEOTIDE SEQUENCE [LARGE SCALE GENOMIC DNA]</scope>
    <source>
        <strain>1021</strain>
    </source>
</reference>
<reference key="2">
    <citation type="journal article" date="2001" name="Science">
        <title>The composite genome of the legume symbiont Sinorhizobium meliloti.</title>
        <authorList>
            <person name="Galibert F."/>
            <person name="Finan T.M."/>
            <person name="Long S.R."/>
            <person name="Puehler A."/>
            <person name="Abola P."/>
            <person name="Ampe F."/>
            <person name="Barloy-Hubler F."/>
            <person name="Barnett M.J."/>
            <person name="Becker A."/>
            <person name="Boistard P."/>
            <person name="Bothe G."/>
            <person name="Boutry M."/>
            <person name="Bowser L."/>
            <person name="Buhrmester J."/>
            <person name="Cadieu E."/>
            <person name="Capela D."/>
            <person name="Chain P."/>
            <person name="Cowie A."/>
            <person name="Davis R.W."/>
            <person name="Dreano S."/>
            <person name="Federspiel N.A."/>
            <person name="Fisher R.F."/>
            <person name="Gloux S."/>
            <person name="Godrie T."/>
            <person name="Goffeau A."/>
            <person name="Golding B."/>
            <person name="Gouzy J."/>
            <person name="Gurjal M."/>
            <person name="Hernandez-Lucas I."/>
            <person name="Hong A."/>
            <person name="Huizar L."/>
            <person name="Hyman R.W."/>
            <person name="Jones T."/>
            <person name="Kahn D."/>
            <person name="Kahn M.L."/>
            <person name="Kalman S."/>
            <person name="Keating D.H."/>
            <person name="Kiss E."/>
            <person name="Komp C."/>
            <person name="Lelaure V."/>
            <person name="Masuy D."/>
            <person name="Palm C."/>
            <person name="Peck M.C."/>
            <person name="Pohl T.M."/>
            <person name="Portetelle D."/>
            <person name="Purnelle B."/>
            <person name="Ramsperger U."/>
            <person name="Surzycki R."/>
            <person name="Thebault P."/>
            <person name="Vandenbol M."/>
            <person name="Vorhoelter F.J."/>
            <person name="Weidner S."/>
            <person name="Wells D.H."/>
            <person name="Wong K."/>
            <person name="Yeh K.-C."/>
            <person name="Batut J."/>
        </authorList>
    </citation>
    <scope>NUCLEOTIDE SEQUENCE [LARGE SCALE GENOMIC DNA]</scope>
    <source>
        <strain>1021</strain>
    </source>
</reference>
<gene>
    <name evidence="1" type="primary">rplP</name>
    <name type="ordered locus">R01363</name>
    <name type="ORF">SMc01302</name>
</gene>
<protein>
    <recommendedName>
        <fullName evidence="1">Large ribosomal subunit protein uL16</fullName>
    </recommendedName>
    <alternativeName>
        <fullName evidence="2">50S ribosomal protein L16</fullName>
    </alternativeName>
</protein>
<evidence type="ECO:0000255" key="1">
    <source>
        <dbReference type="HAMAP-Rule" id="MF_01342"/>
    </source>
</evidence>
<evidence type="ECO:0000305" key="2"/>
<keyword id="KW-1185">Reference proteome</keyword>
<keyword id="KW-0687">Ribonucleoprotein</keyword>
<keyword id="KW-0689">Ribosomal protein</keyword>
<keyword id="KW-0694">RNA-binding</keyword>
<keyword id="KW-0699">rRNA-binding</keyword>
<keyword id="KW-0820">tRNA-binding</keyword>
<dbReference type="EMBL" id="AL591688">
    <property type="protein sequence ID" value="CAC45942.1"/>
    <property type="molecule type" value="Genomic_DNA"/>
</dbReference>
<dbReference type="RefSeq" id="NP_385469.1">
    <property type="nucleotide sequence ID" value="NC_003047.1"/>
</dbReference>
<dbReference type="RefSeq" id="WP_003536531.1">
    <property type="nucleotide sequence ID" value="NC_003047.1"/>
</dbReference>
<dbReference type="SMR" id="Q92QG3"/>
<dbReference type="EnsemblBacteria" id="CAC45942">
    <property type="protein sequence ID" value="CAC45942"/>
    <property type="gene ID" value="SMc01302"/>
</dbReference>
<dbReference type="GeneID" id="89575687"/>
<dbReference type="KEGG" id="sme:SMc01302"/>
<dbReference type="PATRIC" id="fig|266834.11.peg.2779"/>
<dbReference type="eggNOG" id="COG0197">
    <property type="taxonomic scope" value="Bacteria"/>
</dbReference>
<dbReference type="HOGENOM" id="CLU_078858_2_1_5"/>
<dbReference type="OrthoDB" id="9802589at2"/>
<dbReference type="Proteomes" id="UP000001976">
    <property type="component" value="Chromosome"/>
</dbReference>
<dbReference type="GO" id="GO:0022625">
    <property type="term" value="C:cytosolic large ribosomal subunit"/>
    <property type="evidence" value="ECO:0007669"/>
    <property type="project" value="TreeGrafter"/>
</dbReference>
<dbReference type="GO" id="GO:0019843">
    <property type="term" value="F:rRNA binding"/>
    <property type="evidence" value="ECO:0007669"/>
    <property type="project" value="UniProtKB-UniRule"/>
</dbReference>
<dbReference type="GO" id="GO:0003735">
    <property type="term" value="F:structural constituent of ribosome"/>
    <property type="evidence" value="ECO:0007669"/>
    <property type="project" value="InterPro"/>
</dbReference>
<dbReference type="GO" id="GO:0000049">
    <property type="term" value="F:tRNA binding"/>
    <property type="evidence" value="ECO:0007669"/>
    <property type="project" value="UniProtKB-KW"/>
</dbReference>
<dbReference type="GO" id="GO:0006412">
    <property type="term" value="P:translation"/>
    <property type="evidence" value="ECO:0007669"/>
    <property type="project" value="UniProtKB-UniRule"/>
</dbReference>
<dbReference type="CDD" id="cd01433">
    <property type="entry name" value="Ribosomal_L16_L10e"/>
    <property type="match status" value="1"/>
</dbReference>
<dbReference type="FunFam" id="3.90.1170.10:FF:000001">
    <property type="entry name" value="50S ribosomal protein L16"/>
    <property type="match status" value="1"/>
</dbReference>
<dbReference type="Gene3D" id="3.90.1170.10">
    <property type="entry name" value="Ribosomal protein L10e/L16"/>
    <property type="match status" value="1"/>
</dbReference>
<dbReference type="HAMAP" id="MF_01342">
    <property type="entry name" value="Ribosomal_uL16"/>
    <property type="match status" value="1"/>
</dbReference>
<dbReference type="InterPro" id="IPR047873">
    <property type="entry name" value="Ribosomal_uL16"/>
</dbReference>
<dbReference type="InterPro" id="IPR000114">
    <property type="entry name" value="Ribosomal_uL16_bact-type"/>
</dbReference>
<dbReference type="InterPro" id="IPR020798">
    <property type="entry name" value="Ribosomal_uL16_CS"/>
</dbReference>
<dbReference type="InterPro" id="IPR016180">
    <property type="entry name" value="Ribosomal_uL16_dom"/>
</dbReference>
<dbReference type="InterPro" id="IPR036920">
    <property type="entry name" value="Ribosomal_uL16_sf"/>
</dbReference>
<dbReference type="NCBIfam" id="TIGR01164">
    <property type="entry name" value="rplP_bact"/>
    <property type="match status" value="1"/>
</dbReference>
<dbReference type="PANTHER" id="PTHR12220">
    <property type="entry name" value="50S/60S RIBOSOMAL PROTEIN L16"/>
    <property type="match status" value="1"/>
</dbReference>
<dbReference type="PANTHER" id="PTHR12220:SF13">
    <property type="entry name" value="LARGE RIBOSOMAL SUBUNIT PROTEIN UL16M"/>
    <property type="match status" value="1"/>
</dbReference>
<dbReference type="Pfam" id="PF00252">
    <property type="entry name" value="Ribosomal_L16"/>
    <property type="match status" value="1"/>
</dbReference>
<dbReference type="PRINTS" id="PR00060">
    <property type="entry name" value="RIBOSOMALL16"/>
</dbReference>
<dbReference type="SUPFAM" id="SSF54686">
    <property type="entry name" value="Ribosomal protein L16p/L10e"/>
    <property type="match status" value="1"/>
</dbReference>
<dbReference type="PROSITE" id="PS00586">
    <property type="entry name" value="RIBOSOMAL_L16_1"/>
    <property type="match status" value="1"/>
</dbReference>
<dbReference type="PROSITE" id="PS00701">
    <property type="entry name" value="RIBOSOMAL_L16_2"/>
    <property type="match status" value="1"/>
</dbReference>
<feature type="chain" id="PRO_0000062183" description="Large ribosomal subunit protein uL16">
    <location>
        <begin position="1"/>
        <end position="137"/>
    </location>
</feature>
<accession>Q92QG3</accession>
<sequence length="137" mass="15512">MLQPKRTKYRKQFKGRIKGVAKGGSDLAFGEFGLKAQEPNRVNAREIEAARRAITRHMKRAGRVWIRVFPDVPVTAKPTEVRMGKGKGSVEYWACKVKPGRMMFEIDGVNEELAREALRLGAAKLSVKTRFVQRIAE</sequence>
<proteinExistence type="inferred from homology"/>
<name>RL16_RHIME</name>
<comment type="function">
    <text evidence="1">Binds 23S rRNA and is also seen to make contacts with the A and possibly P site tRNAs.</text>
</comment>
<comment type="subunit">
    <text evidence="1">Part of the 50S ribosomal subunit.</text>
</comment>
<comment type="similarity">
    <text evidence="1">Belongs to the universal ribosomal protein uL16 family.</text>
</comment>
<organism>
    <name type="scientific">Rhizobium meliloti (strain 1021)</name>
    <name type="common">Ensifer meliloti</name>
    <name type="synonym">Sinorhizobium meliloti</name>
    <dbReference type="NCBI Taxonomy" id="266834"/>
    <lineage>
        <taxon>Bacteria</taxon>
        <taxon>Pseudomonadati</taxon>
        <taxon>Pseudomonadota</taxon>
        <taxon>Alphaproteobacteria</taxon>
        <taxon>Hyphomicrobiales</taxon>
        <taxon>Rhizobiaceae</taxon>
        <taxon>Sinorhizobium/Ensifer group</taxon>
        <taxon>Sinorhizobium</taxon>
    </lineage>
</organism>